<comment type="function">
    <text evidence="1">Specifically methylates the pseudouridine at position 1915 (m3Psi1915) in 23S rRNA.</text>
</comment>
<comment type="catalytic activity">
    <reaction evidence="1">
        <text>pseudouridine(1915) in 23S rRNA + S-adenosyl-L-methionine = N(3)-methylpseudouridine(1915) in 23S rRNA + S-adenosyl-L-homocysteine + H(+)</text>
        <dbReference type="Rhea" id="RHEA:42752"/>
        <dbReference type="Rhea" id="RHEA-COMP:10221"/>
        <dbReference type="Rhea" id="RHEA-COMP:10222"/>
        <dbReference type="ChEBI" id="CHEBI:15378"/>
        <dbReference type="ChEBI" id="CHEBI:57856"/>
        <dbReference type="ChEBI" id="CHEBI:59789"/>
        <dbReference type="ChEBI" id="CHEBI:65314"/>
        <dbReference type="ChEBI" id="CHEBI:74486"/>
        <dbReference type="EC" id="2.1.1.177"/>
    </reaction>
</comment>
<comment type="subunit">
    <text evidence="1">Homodimer.</text>
</comment>
<comment type="subcellular location">
    <subcellularLocation>
        <location evidence="1">Cytoplasm</location>
    </subcellularLocation>
</comment>
<comment type="similarity">
    <text evidence="1">Belongs to the RNA methyltransferase RlmH family.</text>
</comment>
<accession>Q0ABM7</accession>
<evidence type="ECO:0000255" key="1">
    <source>
        <dbReference type="HAMAP-Rule" id="MF_00658"/>
    </source>
</evidence>
<organism>
    <name type="scientific">Alkalilimnicola ehrlichii (strain ATCC BAA-1101 / DSM 17681 / MLHE-1)</name>
    <dbReference type="NCBI Taxonomy" id="187272"/>
    <lineage>
        <taxon>Bacteria</taxon>
        <taxon>Pseudomonadati</taxon>
        <taxon>Pseudomonadota</taxon>
        <taxon>Gammaproteobacteria</taxon>
        <taxon>Chromatiales</taxon>
        <taxon>Ectothiorhodospiraceae</taxon>
        <taxon>Alkalilimnicola</taxon>
    </lineage>
</organism>
<gene>
    <name evidence="1" type="primary">rlmH</name>
    <name type="ordered locus">Mlg_0406</name>
</gene>
<protein>
    <recommendedName>
        <fullName evidence="1">Ribosomal RNA large subunit methyltransferase H</fullName>
        <ecNumber evidence="1">2.1.1.177</ecNumber>
    </recommendedName>
    <alternativeName>
        <fullName evidence="1">23S rRNA (pseudouridine1915-N3)-methyltransferase</fullName>
    </alternativeName>
    <alternativeName>
        <fullName evidence="1">23S rRNA m3Psi1915 methyltransferase</fullName>
    </alternativeName>
    <alternativeName>
        <fullName evidence="1">rRNA (pseudouridine-N3-)-methyltransferase RlmH</fullName>
    </alternativeName>
</protein>
<keyword id="KW-0963">Cytoplasm</keyword>
<keyword id="KW-0489">Methyltransferase</keyword>
<keyword id="KW-1185">Reference proteome</keyword>
<keyword id="KW-0698">rRNA processing</keyword>
<keyword id="KW-0949">S-adenosyl-L-methionine</keyword>
<keyword id="KW-0808">Transferase</keyword>
<name>RLMH_ALKEH</name>
<proteinExistence type="inferred from homology"/>
<reference key="1">
    <citation type="submission" date="2006-08" db="EMBL/GenBank/DDBJ databases">
        <title>Complete sequence of Alkalilimnicola ehrilichei MLHE-1.</title>
        <authorList>
            <person name="Copeland A."/>
            <person name="Lucas S."/>
            <person name="Lapidus A."/>
            <person name="Barry K."/>
            <person name="Detter J.C."/>
            <person name="Glavina del Rio T."/>
            <person name="Hammon N."/>
            <person name="Israni S."/>
            <person name="Dalin E."/>
            <person name="Tice H."/>
            <person name="Pitluck S."/>
            <person name="Sims D."/>
            <person name="Brettin T."/>
            <person name="Bruce D."/>
            <person name="Han C."/>
            <person name="Tapia R."/>
            <person name="Gilna P."/>
            <person name="Schmutz J."/>
            <person name="Larimer F."/>
            <person name="Land M."/>
            <person name="Hauser L."/>
            <person name="Kyrpides N."/>
            <person name="Mikhailova N."/>
            <person name="Oremland R.S."/>
            <person name="Hoeft S.E."/>
            <person name="Switzer-Blum J."/>
            <person name="Kulp T."/>
            <person name="King G."/>
            <person name="Tabita R."/>
            <person name="Witte B."/>
            <person name="Santini J.M."/>
            <person name="Basu P."/>
            <person name="Hollibaugh J.T."/>
            <person name="Xie G."/>
            <person name="Stolz J.F."/>
            <person name="Richardson P."/>
        </authorList>
    </citation>
    <scope>NUCLEOTIDE SEQUENCE [LARGE SCALE GENOMIC DNA]</scope>
    <source>
        <strain>ATCC BAA-1101 / DSM 17681 / MLHE-1</strain>
    </source>
</reference>
<sequence length="155" mass="17333">MRIRLISVGGRMPGWAAEGYREYAQRLGGGISLELVEIPLGRRGKGADPRRALDEEGRRMLKALGDEQVVALDVRGKAWDTPALARELDGWLHDGRDLALLVGGPDGLHPDCLARAERRWSLSPLTFPHMLVRVLLAEQLYRAWSLLQGHPYHRA</sequence>
<dbReference type="EC" id="2.1.1.177" evidence="1"/>
<dbReference type="EMBL" id="CP000453">
    <property type="protein sequence ID" value="ABI55760.1"/>
    <property type="molecule type" value="Genomic_DNA"/>
</dbReference>
<dbReference type="RefSeq" id="WP_011628156.1">
    <property type="nucleotide sequence ID" value="NC_008340.1"/>
</dbReference>
<dbReference type="SMR" id="Q0ABM7"/>
<dbReference type="KEGG" id="aeh:Mlg_0406"/>
<dbReference type="eggNOG" id="COG1576">
    <property type="taxonomic scope" value="Bacteria"/>
</dbReference>
<dbReference type="HOGENOM" id="CLU_100552_1_0_6"/>
<dbReference type="OrthoDB" id="9806643at2"/>
<dbReference type="Proteomes" id="UP000001962">
    <property type="component" value="Chromosome"/>
</dbReference>
<dbReference type="GO" id="GO:0005737">
    <property type="term" value="C:cytoplasm"/>
    <property type="evidence" value="ECO:0007669"/>
    <property type="project" value="UniProtKB-SubCell"/>
</dbReference>
<dbReference type="GO" id="GO:0070038">
    <property type="term" value="F:rRNA (pseudouridine-N3-)-methyltransferase activity"/>
    <property type="evidence" value="ECO:0007669"/>
    <property type="project" value="UniProtKB-UniRule"/>
</dbReference>
<dbReference type="CDD" id="cd18081">
    <property type="entry name" value="RlmH-like"/>
    <property type="match status" value="1"/>
</dbReference>
<dbReference type="Gene3D" id="3.40.1280.10">
    <property type="match status" value="1"/>
</dbReference>
<dbReference type="HAMAP" id="MF_00658">
    <property type="entry name" value="23SrRNA_methyltr_H"/>
    <property type="match status" value="1"/>
</dbReference>
<dbReference type="InterPro" id="IPR029028">
    <property type="entry name" value="Alpha/beta_knot_MTases"/>
</dbReference>
<dbReference type="InterPro" id="IPR003742">
    <property type="entry name" value="RlmH-like"/>
</dbReference>
<dbReference type="InterPro" id="IPR029026">
    <property type="entry name" value="tRNA_m1G_MTases_N"/>
</dbReference>
<dbReference type="NCBIfam" id="NF000986">
    <property type="entry name" value="PRK00103.1-4"/>
    <property type="match status" value="1"/>
</dbReference>
<dbReference type="NCBIfam" id="TIGR00246">
    <property type="entry name" value="tRNA_RlmH_YbeA"/>
    <property type="match status" value="1"/>
</dbReference>
<dbReference type="PANTHER" id="PTHR33603">
    <property type="entry name" value="METHYLTRANSFERASE"/>
    <property type="match status" value="1"/>
</dbReference>
<dbReference type="PANTHER" id="PTHR33603:SF1">
    <property type="entry name" value="RIBOSOMAL RNA LARGE SUBUNIT METHYLTRANSFERASE H"/>
    <property type="match status" value="1"/>
</dbReference>
<dbReference type="Pfam" id="PF02590">
    <property type="entry name" value="SPOUT_MTase"/>
    <property type="match status" value="1"/>
</dbReference>
<dbReference type="PIRSF" id="PIRSF004505">
    <property type="entry name" value="MT_bac"/>
    <property type="match status" value="1"/>
</dbReference>
<dbReference type="SUPFAM" id="SSF75217">
    <property type="entry name" value="alpha/beta knot"/>
    <property type="match status" value="1"/>
</dbReference>
<feature type="chain" id="PRO_0000260534" description="Ribosomal RNA large subunit methyltransferase H">
    <location>
        <begin position="1"/>
        <end position="155"/>
    </location>
</feature>
<feature type="binding site" evidence="1">
    <location>
        <position position="72"/>
    </location>
    <ligand>
        <name>S-adenosyl-L-methionine</name>
        <dbReference type="ChEBI" id="CHEBI:59789"/>
    </ligand>
</feature>
<feature type="binding site" evidence="1">
    <location>
        <position position="103"/>
    </location>
    <ligand>
        <name>S-adenosyl-L-methionine</name>
        <dbReference type="ChEBI" id="CHEBI:59789"/>
    </ligand>
</feature>
<feature type="binding site" evidence="1">
    <location>
        <begin position="122"/>
        <end position="127"/>
    </location>
    <ligand>
        <name>S-adenosyl-L-methionine</name>
        <dbReference type="ChEBI" id="CHEBI:59789"/>
    </ligand>
</feature>